<accession>P10419</accession>
<feature type="signal peptide" evidence="1">
    <location>
        <begin position="1"/>
        <end position="22"/>
    </location>
</feature>
<feature type="propeptide" id="PRO_0000009780">
    <location>
        <begin position="23"/>
        <end position="193"/>
    </location>
</feature>
<feature type="peptide" id="PRO_0000009781" description="Antho-RFamide">
    <location>
        <begin position="194"/>
        <end position="197"/>
    </location>
</feature>
<feature type="propeptide" id="PRO_0000009782">
    <location>
        <begin position="199"/>
        <end position="201"/>
    </location>
</feature>
<feature type="peptide" id="PRO_0000009783" description="Antho-RFamide">
    <location>
        <begin position="202"/>
        <end position="205"/>
    </location>
</feature>
<feature type="propeptide" id="PRO_0000009784">
    <location>
        <begin position="207"/>
        <end position="209"/>
    </location>
</feature>
<feature type="peptide" id="PRO_0000009785" description="Antho-RFamide">
    <location>
        <begin position="210"/>
        <end position="213"/>
    </location>
</feature>
<feature type="propeptide" id="PRO_0000009786">
    <location>
        <begin position="215"/>
        <end position="217"/>
    </location>
</feature>
<feature type="peptide" id="PRO_0000009787" description="Antho-RFamide">
    <location>
        <begin position="218"/>
        <end position="221"/>
    </location>
</feature>
<feature type="propeptide" id="PRO_0000009788">
    <location>
        <begin position="223"/>
        <end position="225"/>
    </location>
</feature>
<feature type="peptide" id="PRO_0000009789" description="Antho-RFamide">
    <location>
        <begin position="226"/>
        <end position="229"/>
    </location>
</feature>
<feature type="propeptide" id="PRO_0000009790">
    <location>
        <begin position="231"/>
        <end position="233"/>
    </location>
</feature>
<feature type="peptide" id="PRO_0000009791" description="Antho-RFamide">
    <location>
        <begin position="234"/>
        <end position="237"/>
    </location>
</feature>
<feature type="propeptide" id="PRO_0000009792">
    <location>
        <begin position="239"/>
        <end position="241"/>
    </location>
</feature>
<feature type="peptide" id="PRO_0000009793" description="Antho-RFamide">
    <location>
        <begin position="242"/>
        <end position="245"/>
    </location>
</feature>
<feature type="propeptide" id="PRO_0000009794">
    <location>
        <begin position="247"/>
        <end position="249"/>
    </location>
</feature>
<feature type="peptide" id="PRO_0000009795" description="Antho-RFamide">
    <location>
        <begin position="250"/>
        <end position="253"/>
    </location>
</feature>
<feature type="propeptide" id="PRO_0000009796">
    <location>
        <begin position="255"/>
        <end position="257"/>
    </location>
</feature>
<feature type="peptide" id="PRO_0000009797" description="Antho-RFamide">
    <location>
        <begin position="258"/>
        <end position="261"/>
    </location>
</feature>
<feature type="propeptide" id="PRO_0000009798">
    <location>
        <begin position="263"/>
        <end position="265"/>
    </location>
</feature>
<feature type="peptide" id="PRO_0000009799" description="Antho-RFamide">
    <location>
        <begin position="266"/>
        <end position="269"/>
    </location>
</feature>
<feature type="propeptide" id="PRO_0000009800">
    <location>
        <begin position="271"/>
        <end position="273"/>
    </location>
</feature>
<feature type="peptide" id="PRO_0000009801" description="Antho-RFamide">
    <location>
        <begin position="274"/>
        <end position="277"/>
    </location>
</feature>
<feature type="propeptide" id="PRO_0000009802">
    <location>
        <begin position="279"/>
        <end position="281"/>
    </location>
</feature>
<feature type="peptide" id="PRO_0000009803" description="Antho-RFamide">
    <location>
        <begin position="282"/>
        <end position="285"/>
    </location>
</feature>
<feature type="propeptide" id="PRO_0000009804">
    <location>
        <begin position="287"/>
        <end position="289"/>
    </location>
</feature>
<feature type="peptide" id="PRO_0000009805" description="Antho-RFamide">
    <location>
        <begin position="290"/>
        <end position="293"/>
    </location>
</feature>
<feature type="propeptide" id="PRO_0000009806">
    <location>
        <begin position="295"/>
        <end position="297"/>
    </location>
</feature>
<feature type="peptide" id="PRO_0000009807" description="Antho-RFamide">
    <location>
        <begin position="298"/>
        <end position="301"/>
    </location>
</feature>
<feature type="propeptide" id="PRO_0000009808">
    <location>
        <begin position="303"/>
        <end position="305"/>
    </location>
</feature>
<feature type="peptide" id="PRO_0000009809" description="Antho-RFamide">
    <location>
        <begin position="306"/>
        <end position="309"/>
    </location>
</feature>
<feature type="propeptide" id="PRO_0000009810">
    <location>
        <begin position="311"/>
        <end position="313"/>
    </location>
</feature>
<feature type="peptide" id="PRO_0000009811" description="Antho-RFamide">
    <location>
        <begin position="314"/>
        <end position="317"/>
    </location>
</feature>
<feature type="propeptide" id="PRO_0000009812">
    <location>
        <begin position="319"/>
        <end position="321"/>
    </location>
</feature>
<feature type="peptide" id="PRO_0000009813" description="Antho-RFamide">
    <location>
        <begin position="322"/>
        <end position="325"/>
    </location>
</feature>
<feature type="propeptide" id="PRO_0000009814">
    <location>
        <begin position="327"/>
        <end position="329"/>
    </location>
</feature>
<feature type="peptide" id="PRO_0000009815" description="Antho-RFamide">
    <location>
        <begin position="330"/>
        <end position="333"/>
    </location>
</feature>
<feature type="propeptide" id="PRO_0000009816">
    <location>
        <begin position="335"/>
        <end position="342"/>
    </location>
</feature>
<feature type="peptide" id="PRO_0000009817" description="Antho-RFamide">
    <location>
        <begin position="343"/>
        <end position="346"/>
    </location>
</feature>
<feature type="propeptide" id="PRO_0000009818">
    <location>
        <begin position="348"/>
        <end position="355"/>
    </location>
</feature>
<feature type="peptide" id="PRO_0000009819" description="Antho-RFamide">
    <location>
        <begin position="356"/>
        <end position="359"/>
    </location>
</feature>
<feature type="propeptide" id="PRO_0000009820">
    <location>
        <begin position="361"/>
        <end position="368"/>
    </location>
</feature>
<feature type="peptide" id="PRO_0000009821" description="Antho-RFamide">
    <location>
        <begin position="369"/>
        <end position="372"/>
    </location>
</feature>
<feature type="propeptide" id="PRO_0000009822">
    <location>
        <begin position="374"/>
        <end position="435"/>
    </location>
</feature>
<feature type="region of interest" description="Disordered" evidence="2">
    <location>
        <begin position="230"/>
        <end position="374"/>
    </location>
</feature>
<feature type="region of interest" description="Disordered" evidence="2">
    <location>
        <begin position="386"/>
        <end position="435"/>
    </location>
</feature>
<feature type="compositionally biased region" description="Basic and acidic residues" evidence="2">
    <location>
        <begin position="230"/>
        <end position="371"/>
    </location>
</feature>
<feature type="compositionally biased region" description="Basic and acidic residues" evidence="2">
    <location>
        <begin position="398"/>
        <end position="435"/>
    </location>
</feature>
<feature type="modified residue" description="Pyrrolidone carboxylic acid" evidence="3">
    <location>
        <position position="194"/>
    </location>
</feature>
<feature type="modified residue" description="Phenylalanine amide" evidence="3">
    <location>
        <position position="197"/>
    </location>
</feature>
<feature type="modified residue" description="Phenylalanine amide" evidence="3">
    <location>
        <position position="205"/>
    </location>
</feature>
<feature type="modified residue" description="Phenylalanine amide" evidence="3">
    <location>
        <position position="213"/>
    </location>
</feature>
<feature type="modified residue" description="Phenylalanine amide" evidence="3">
    <location>
        <position position="221"/>
    </location>
</feature>
<feature type="modified residue" description="Phenylalanine amide" evidence="3">
    <location>
        <position position="229"/>
    </location>
</feature>
<feature type="modified residue" description="Phenylalanine amide" evidence="3">
    <location>
        <position position="237"/>
    </location>
</feature>
<feature type="modified residue" description="Phenylalanine amide" evidence="3">
    <location>
        <position position="245"/>
    </location>
</feature>
<feature type="modified residue" description="Phenylalanine amide" evidence="3">
    <location>
        <position position="253"/>
    </location>
</feature>
<feature type="modified residue" description="Phenylalanine amide" evidence="3">
    <location>
        <position position="261"/>
    </location>
</feature>
<feature type="modified residue" description="Phenylalanine amide" evidence="3">
    <location>
        <position position="269"/>
    </location>
</feature>
<feature type="modified residue" description="Phenylalanine amide" evidence="3">
    <location>
        <position position="277"/>
    </location>
</feature>
<feature type="modified residue" description="Phenylalanine amide" evidence="3">
    <location>
        <position position="285"/>
    </location>
</feature>
<feature type="modified residue" description="Phenylalanine amide" evidence="3">
    <location>
        <position position="293"/>
    </location>
</feature>
<feature type="modified residue" description="Phenylalanine amide" evidence="3">
    <location>
        <position position="301"/>
    </location>
</feature>
<feature type="modified residue" description="Phenylalanine amide" evidence="3">
    <location>
        <position position="309"/>
    </location>
</feature>
<feature type="modified residue" description="Phenylalanine amide" evidence="3">
    <location>
        <position position="317"/>
    </location>
</feature>
<feature type="modified residue" description="Phenylalanine amide" evidence="3">
    <location>
        <position position="325"/>
    </location>
</feature>
<feature type="modified residue" description="Phenylalanine amide" evidence="3">
    <location>
        <position position="333"/>
    </location>
</feature>
<feature type="modified residue" description="Phenylalanine amide" evidence="3">
    <location>
        <position position="346"/>
    </location>
</feature>
<feature type="modified residue" description="Phenylalanine amide" evidence="3">
    <location>
        <position position="359"/>
    </location>
</feature>
<feature type="modified residue" description="Phenylalanine amide" evidence="3">
    <location>
        <position position="372"/>
    </location>
</feature>
<reference key="1">
    <citation type="journal article" date="1992" name="J. Biol. Chem.">
        <title>Identification of a novel type of processing sites in the precursor for the sea anemone neuropeptide Antho-RFamide (&lt;Glu-Gly-Arg-Phe-NH2) from Anthopleura elegantissima.</title>
        <authorList>
            <person name="Schmutzler C."/>
            <person name="Darmer D."/>
            <person name="Diekhoff D."/>
            <person name="Grimmelikhuijzen C.J.P."/>
        </authorList>
    </citation>
    <scope>NUCLEOTIDE SEQUENCE [MRNA]</scope>
</reference>
<reference key="2">
    <citation type="journal article" date="1986" name="Proc. Natl. Acad. Sci. U.S.A.">
        <title>Isolation of pyroGlu-Gly-Arg-Phe-NH2 (Antho-RFamide), a neuropeptide from sea anemones.</title>
        <authorList>
            <person name="Grimmelikhuijzen C.J.P."/>
            <person name="Graff D."/>
        </authorList>
    </citation>
    <scope>PARTIAL PROTEIN SEQUENCE (ANTHO-RFAMIDE)</scope>
    <scope>PYROGLUTAMATE FORMATION AT GLN-194</scope>
    <scope>AMIDATION AT PHE-197; PHE-205; PHE-213; PHE-221; PHE-229; PHE-237; PHE-245; PHE-253; PHE-261; PHE-269; PHE-277; PHE-285; PHE-293; PHE-301; PHE-309; PHE-317; PHE-325; PHE-333; PHE-346; PHE-359 AND PHE-372</scope>
</reference>
<keyword id="KW-0027">Amidation</keyword>
<keyword id="KW-0165">Cleavage on pair of basic residues</keyword>
<keyword id="KW-0903">Direct protein sequencing</keyword>
<keyword id="KW-0527">Neuropeptide</keyword>
<keyword id="KW-0873">Pyrrolidone carboxylic acid</keyword>
<keyword id="KW-0677">Repeat</keyword>
<keyword id="KW-0964">Secreted</keyword>
<keyword id="KW-0732">Signal</keyword>
<dbReference type="EMBL" id="M98269">
    <property type="protein sequence ID" value="AAA27738.1"/>
    <property type="molecule type" value="mRNA"/>
</dbReference>
<dbReference type="PIR" id="A26666">
    <property type="entry name" value="ECXAA"/>
</dbReference>
<dbReference type="PIR" id="A44308">
    <property type="entry name" value="A44308"/>
</dbReference>
<dbReference type="SMR" id="P10419"/>
<dbReference type="GO" id="GO:0005576">
    <property type="term" value="C:extracellular region"/>
    <property type="evidence" value="ECO:0007669"/>
    <property type="project" value="UniProtKB-SubCell"/>
</dbReference>
<dbReference type="GO" id="GO:0007218">
    <property type="term" value="P:neuropeptide signaling pathway"/>
    <property type="evidence" value="ECO:0007669"/>
    <property type="project" value="UniProtKB-KW"/>
</dbReference>
<dbReference type="InterPro" id="IPR052690">
    <property type="entry name" value="Antho-RFamide"/>
</dbReference>
<dbReference type="InterPro" id="IPR002544">
    <property type="entry name" value="FMRFamid-related_peptide-like"/>
</dbReference>
<dbReference type="PANTHER" id="PTHR31709">
    <property type="entry name" value="LEUCINE ZIPPER PROTEIN 4-RELATED"/>
    <property type="match status" value="1"/>
</dbReference>
<dbReference type="PANTHER" id="PTHR31709:SF3">
    <property type="entry name" value="LEUCINE ZIPPER PROTEIN 4-RELATED"/>
    <property type="match status" value="1"/>
</dbReference>
<dbReference type="Pfam" id="PF01581">
    <property type="entry name" value="FARP"/>
    <property type="match status" value="7"/>
</dbReference>
<protein>
    <recommendedName>
        <fullName>Antho-RFamide neuropeptides type 1</fullName>
    </recommendedName>
    <component>
        <recommendedName>
            <fullName>Antho-RFamide</fullName>
        </recommendedName>
    </component>
</protein>
<name>FMR1_ANTEL</name>
<organism>
    <name type="scientific">Anthopleura elegantissima</name>
    <name type="common">Green aggregating anemone</name>
    <name type="synonym">Actinia elegantissima</name>
    <dbReference type="NCBI Taxonomy" id="6110"/>
    <lineage>
        <taxon>Eukaryota</taxon>
        <taxon>Metazoa</taxon>
        <taxon>Cnidaria</taxon>
        <taxon>Anthozoa</taxon>
        <taxon>Hexacorallia</taxon>
        <taxon>Actiniaria</taxon>
        <taxon>Actiniidae</taxon>
        <taxon>Anthopleura</taxon>
    </lineage>
</organism>
<proteinExistence type="evidence at protein level"/>
<comment type="function">
    <text>Not known but it could act as a transmitter at neuromuscular synapses.</text>
</comment>
<comment type="subcellular location">
    <subcellularLocation>
        <location>Secreted</location>
    </subcellularLocation>
</comment>
<comment type="similarity">
    <text evidence="4">Belongs to the FARP (FMRFamide related peptide) family.</text>
</comment>
<sequence>MTTVSYVTILLTVLVQVLTSDAKATNNKRELSSGLKERSLSDDAPQFWKGRFSRSEEDPQFWKGRFSDPQFWKGRFSDPQFWKGRFSDPQFWKGRFSDPQFWKGRFSDPQFWKGRFSDPQFWKGRFSDGTKRENDPQYWKGRFSRSFEDQPDSEAQFWKGRFARTSSGEKREPQYWKGRFSRDSVPGRYGRELQGRFGRELQGRFGREAQGRFGRELQGRFGREFQGRFGREDQGRFGREDQGRFGREDQGRFGREDQGRFGREDQGRFGREDQGRFGRELQGRFGREFQGRFGREDQGRFGREDQGRFGRELQGRFGREDQGRFGREDQGRFGREDLAKEDQGRFGREDLAKEDQGRFGREDIAEADQGRFGRNAAAAAAAAAAAKKRTIDVIDIESDPKPQTRFRDGKDMQEKRKVEKKDKIEKSDDALAKTS</sequence>
<evidence type="ECO:0000255" key="1"/>
<evidence type="ECO:0000256" key="2">
    <source>
        <dbReference type="SAM" id="MobiDB-lite"/>
    </source>
</evidence>
<evidence type="ECO:0000269" key="3">
    <source>
    </source>
</evidence>
<evidence type="ECO:0000305" key="4"/>